<keyword id="KW-1185">Reference proteome</keyword>
<gene>
    <name evidence="1" type="primary">ycgN</name>
    <name type="ordered locus">SbBS512_E1336</name>
</gene>
<sequence length="153" mass="17965">MAEHLMNDVPFWQSKTLDEMSDAEWESLCDGCGQCCLHKLMDEDTDEIYFTNVACRQLNIKTCQCRNYERRFEFEPDCIKLTRENLPTFEWLPMTCAYRLLAEGKDLPVWHPLLTGSKAAMHGERISVRHIAVKESEVIDWQDHILNKPDWAQ</sequence>
<comment type="similarity">
    <text evidence="1">Belongs to the UPF0260 family.</text>
</comment>
<feature type="chain" id="PRO_1000131640" description="UPF0260 protein YcgN">
    <location>
        <begin position="1"/>
        <end position="153"/>
    </location>
</feature>
<evidence type="ECO:0000255" key="1">
    <source>
        <dbReference type="HAMAP-Rule" id="MF_00676"/>
    </source>
</evidence>
<name>YCGN_SHIB3</name>
<proteinExistence type="inferred from homology"/>
<organism>
    <name type="scientific">Shigella boydii serotype 18 (strain CDC 3083-94 / BS512)</name>
    <dbReference type="NCBI Taxonomy" id="344609"/>
    <lineage>
        <taxon>Bacteria</taxon>
        <taxon>Pseudomonadati</taxon>
        <taxon>Pseudomonadota</taxon>
        <taxon>Gammaproteobacteria</taxon>
        <taxon>Enterobacterales</taxon>
        <taxon>Enterobacteriaceae</taxon>
        <taxon>Shigella</taxon>
    </lineage>
</organism>
<dbReference type="EMBL" id="CP001063">
    <property type="protein sequence ID" value="ACD09232.1"/>
    <property type="molecule type" value="Genomic_DNA"/>
</dbReference>
<dbReference type="STRING" id="344609.SbBS512_E1336"/>
<dbReference type="KEGG" id="sbc:SbBS512_E1336"/>
<dbReference type="HOGENOM" id="CLU_109769_2_0_6"/>
<dbReference type="Proteomes" id="UP000001030">
    <property type="component" value="Chromosome"/>
</dbReference>
<dbReference type="HAMAP" id="MF_00676">
    <property type="entry name" value="UPF0260"/>
    <property type="match status" value="1"/>
</dbReference>
<dbReference type="InterPro" id="IPR005358">
    <property type="entry name" value="Puta_zinc/iron-chelating_dom"/>
</dbReference>
<dbReference type="InterPro" id="IPR008228">
    <property type="entry name" value="UCP006173"/>
</dbReference>
<dbReference type="NCBIfam" id="NF003498">
    <property type="entry name" value="PRK05170.1-1"/>
    <property type="match status" value="1"/>
</dbReference>
<dbReference type="NCBIfam" id="NF003501">
    <property type="entry name" value="PRK05170.1-5"/>
    <property type="match status" value="1"/>
</dbReference>
<dbReference type="NCBIfam" id="NF003503">
    <property type="entry name" value="PRK05170.2-1"/>
    <property type="match status" value="1"/>
</dbReference>
<dbReference type="NCBIfam" id="NF003507">
    <property type="entry name" value="PRK05170.2-5"/>
    <property type="match status" value="1"/>
</dbReference>
<dbReference type="PANTHER" id="PTHR37421">
    <property type="entry name" value="UPF0260 PROTEIN YCGN"/>
    <property type="match status" value="1"/>
</dbReference>
<dbReference type="PANTHER" id="PTHR37421:SF1">
    <property type="entry name" value="UPF0260 PROTEIN YCGN"/>
    <property type="match status" value="1"/>
</dbReference>
<dbReference type="Pfam" id="PF03692">
    <property type="entry name" value="CxxCxxCC"/>
    <property type="match status" value="1"/>
</dbReference>
<dbReference type="PIRSF" id="PIRSF006173">
    <property type="entry name" value="UCP006173"/>
    <property type="match status" value="1"/>
</dbReference>
<accession>B2TZA8</accession>
<reference key="1">
    <citation type="submission" date="2008-05" db="EMBL/GenBank/DDBJ databases">
        <title>Complete sequence of Shigella boydii serotype 18 strain BS512.</title>
        <authorList>
            <person name="Rasko D.A."/>
            <person name="Rosovitz M."/>
            <person name="Maurelli A.T."/>
            <person name="Myers G."/>
            <person name="Seshadri R."/>
            <person name="Cer R."/>
            <person name="Jiang L."/>
            <person name="Ravel J."/>
            <person name="Sebastian Y."/>
        </authorList>
    </citation>
    <scope>NUCLEOTIDE SEQUENCE [LARGE SCALE GENOMIC DNA]</scope>
    <source>
        <strain>CDC 3083-94 / BS512</strain>
    </source>
</reference>
<protein>
    <recommendedName>
        <fullName evidence="1">UPF0260 protein YcgN</fullName>
    </recommendedName>
</protein>